<keyword id="KW-0030">Aminoacyl-tRNA synthetase</keyword>
<keyword id="KW-0067">ATP-binding</keyword>
<keyword id="KW-0963">Cytoplasm</keyword>
<keyword id="KW-0436">Ligase</keyword>
<keyword id="KW-0547">Nucleotide-binding</keyword>
<keyword id="KW-0648">Protein biosynthesis</keyword>
<accession>A2C7N5</accession>
<reference key="1">
    <citation type="journal article" date="2007" name="PLoS Genet.">
        <title>Patterns and implications of gene gain and loss in the evolution of Prochlorococcus.</title>
        <authorList>
            <person name="Kettler G.C."/>
            <person name="Martiny A.C."/>
            <person name="Huang K."/>
            <person name="Zucker J."/>
            <person name="Coleman M.L."/>
            <person name="Rodrigue S."/>
            <person name="Chen F."/>
            <person name="Lapidus A."/>
            <person name="Ferriera S."/>
            <person name="Johnson J."/>
            <person name="Steglich C."/>
            <person name="Church G.M."/>
            <person name="Richardson P."/>
            <person name="Chisholm S.W."/>
        </authorList>
    </citation>
    <scope>NUCLEOTIDE SEQUENCE [LARGE SCALE GENOMIC DNA]</scope>
    <source>
        <strain>MIT 9303</strain>
    </source>
</reference>
<sequence length="599" mass="66277">MRVSRLMLVTLRDVPADAEIASHQLLLRGGYIRRVTSGIYAYLPLMWRVLRKITAIVQEEMDATGALETLLPQLQPAELWRRSGRWQGYTAGEGLMFHLEDRQGRELGLGPTHEEVITSLAGDLLRSYRQLPVTLYQIQSKFRDEIRPRFGLMRGREFIMKDAYSFHACEADLAMTYTAMDEAYQRIFSRCGLETVAVEADSGAIGGASSQEFMVTADAGEDLILISGDGLYAANQEKAVSHPPKAIPLLASKAALLDTPEQGTIETLCTAQGLVPSQVVKVLVMLARIEDGELQPVLVSIRGDQQLNEVKLINALSRELNKGVLDVAPISADQISAQKLEAWPFGAMGPDLDDALLSEATSWTKHFLRLADPTATELNCFVCGANQNNQHRIGMTWSKLGEVPKSVDLRKSQAGDRCIHDSSQILEERRGIEVGHIFQLGRKYSEALEACFTNDKGTQEPFWMGCYGIGISRLAQAAVEQHHDEAGMNWPLAIAPFEVIIVVANIQDEVQQKLAEQLYSELQAADIEVLLDDRNERAGVKFKDADLIGIPWRIVVGRDAAKGQVELIQRSSRKVEILSATQAFTALVQEIAANQNTRV</sequence>
<dbReference type="EC" id="6.1.1.15" evidence="1"/>
<dbReference type="EMBL" id="CP000554">
    <property type="protein sequence ID" value="ABM77495.1"/>
    <property type="molecule type" value="Genomic_DNA"/>
</dbReference>
<dbReference type="RefSeq" id="WP_011825409.1">
    <property type="nucleotide sequence ID" value="NC_008820.1"/>
</dbReference>
<dbReference type="SMR" id="A2C7N5"/>
<dbReference type="STRING" id="59922.P9303_07441"/>
<dbReference type="KEGG" id="pmf:P9303_07441"/>
<dbReference type="HOGENOM" id="CLU_016739_0_0_3"/>
<dbReference type="BioCyc" id="PMAR59922:G1G80-679-MONOMER"/>
<dbReference type="Proteomes" id="UP000002274">
    <property type="component" value="Chromosome"/>
</dbReference>
<dbReference type="GO" id="GO:0005829">
    <property type="term" value="C:cytosol"/>
    <property type="evidence" value="ECO:0007669"/>
    <property type="project" value="TreeGrafter"/>
</dbReference>
<dbReference type="GO" id="GO:0002161">
    <property type="term" value="F:aminoacyl-tRNA deacylase activity"/>
    <property type="evidence" value="ECO:0007669"/>
    <property type="project" value="InterPro"/>
</dbReference>
<dbReference type="GO" id="GO:0005524">
    <property type="term" value="F:ATP binding"/>
    <property type="evidence" value="ECO:0007669"/>
    <property type="project" value="UniProtKB-UniRule"/>
</dbReference>
<dbReference type="GO" id="GO:0004827">
    <property type="term" value="F:proline-tRNA ligase activity"/>
    <property type="evidence" value="ECO:0007669"/>
    <property type="project" value="UniProtKB-UniRule"/>
</dbReference>
<dbReference type="GO" id="GO:0006433">
    <property type="term" value="P:prolyl-tRNA aminoacylation"/>
    <property type="evidence" value="ECO:0007669"/>
    <property type="project" value="UniProtKB-UniRule"/>
</dbReference>
<dbReference type="CDD" id="cd04334">
    <property type="entry name" value="ProRS-INS"/>
    <property type="match status" value="1"/>
</dbReference>
<dbReference type="CDD" id="cd00861">
    <property type="entry name" value="ProRS_anticodon_short"/>
    <property type="match status" value="1"/>
</dbReference>
<dbReference type="CDD" id="cd00779">
    <property type="entry name" value="ProRS_core_prok"/>
    <property type="match status" value="1"/>
</dbReference>
<dbReference type="FunFam" id="3.40.50.800:FF:000011">
    <property type="entry name" value="Proline--tRNA ligase"/>
    <property type="match status" value="1"/>
</dbReference>
<dbReference type="Gene3D" id="3.40.50.800">
    <property type="entry name" value="Anticodon-binding domain"/>
    <property type="match status" value="1"/>
</dbReference>
<dbReference type="Gene3D" id="3.30.930.10">
    <property type="entry name" value="Bira Bifunctional Protein, Domain 2"/>
    <property type="match status" value="2"/>
</dbReference>
<dbReference type="HAMAP" id="MF_01569">
    <property type="entry name" value="Pro_tRNA_synth_type1"/>
    <property type="match status" value="1"/>
</dbReference>
<dbReference type="InterPro" id="IPR002314">
    <property type="entry name" value="aa-tRNA-synt_IIb"/>
</dbReference>
<dbReference type="InterPro" id="IPR006195">
    <property type="entry name" value="aa-tRNA-synth_II"/>
</dbReference>
<dbReference type="InterPro" id="IPR045864">
    <property type="entry name" value="aa-tRNA-synth_II/BPL/LPL"/>
</dbReference>
<dbReference type="InterPro" id="IPR004154">
    <property type="entry name" value="Anticodon-bd"/>
</dbReference>
<dbReference type="InterPro" id="IPR036621">
    <property type="entry name" value="Anticodon-bd_dom_sf"/>
</dbReference>
<dbReference type="InterPro" id="IPR002316">
    <property type="entry name" value="Pro-tRNA-ligase_IIa"/>
</dbReference>
<dbReference type="InterPro" id="IPR004500">
    <property type="entry name" value="Pro-tRNA-synth_IIa_bac-type"/>
</dbReference>
<dbReference type="InterPro" id="IPR023717">
    <property type="entry name" value="Pro-tRNA-Synthase_IIa_type1"/>
</dbReference>
<dbReference type="InterPro" id="IPR050062">
    <property type="entry name" value="Pro-tRNA_synthetase"/>
</dbReference>
<dbReference type="InterPro" id="IPR044140">
    <property type="entry name" value="ProRS_anticodon_short"/>
</dbReference>
<dbReference type="InterPro" id="IPR033730">
    <property type="entry name" value="ProRS_core_prok"/>
</dbReference>
<dbReference type="InterPro" id="IPR036754">
    <property type="entry name" value="YbaK/aa-tRNA-synt-asso_dom_sf"/>
</dbReference>
<dbReference type="NCBIfam" id="NF006625">
    <property type="entry name" value="PRK09194.1"/>
    <property type="match status" value="1"/>
</dbReference>
<dbReference type="NCBIfam" id="TIGR00409">
    <property type="entry name" value="proS_fam_II"/>
    <property type="match status" value="1"/>
</dbReference>
<dbReference type="PANTHER" id="PTHR42753">
    <property type="entry name" value="MITOCHONDRIAL RIBOSOME PROTEIN L39/PROLYL-TRNA LIGASE FAMILY MEMBER"/>
    <property type="match status" value="1"/>
</dbReference>
<dbReference type="PANTHER" id="PTHR42753:SF2">
    <property type="entry name" value="PROLINE--TRNA LIGASE"/>
    <property type="match status" value="1"/>
</dbReference>
<dbReference type="Pfam" id="PF03129">
    <property type="entry name" value="HGTP_anticodon"/>
    <property type="match status" value="1"/>
</dbReference>
<dbReference type="Pfam" id="PF00587">
    <property type="entry name" value="tRNA-synt_2b"/>
    <property type="match status" value="1"/>
</dbReference>
<dbReference type="PRINTS" id="PR01046">
    <property type="entry name" value="TRNASYNTHPRO"/>
</dbReference>
<dbReference type="SUPFAM" id="SSF52954">
    <property type="entry name" value="Class II aaRS ABD-related"/>
    <property type="match status" value="1"/>
</dbReference>
<dbReference type="SUPFAM" id="SSF55681">
    <property type="entry name" value="Class II aaRS and biotin synthetases"/>
    <property type="match status" value="1"/>
</dbReference>
<dbReference type="SUPFAM" id="SSF55826">
    <property type="entry name" value="YbaK/ProRS associated domain"/>
    <property type="match status" value="1"/>
</dbReference>
<dbReference type="PROSITE" id="PS50862">
    <property type="entry name" value="AA_TRNA_LIGASE_II"/>
    <property type="match status" value="1"/>
</dbReference>
<proteinExistence type="inferred from homology"/>
<gene>
    <name evidence="1" type="primary">proS</name>
    <name type="ordered locus">P9303_07441</name>
</gene>
<feature type="chain" id="PRO_0000288363" description="Proline--tRNA ligase">
    <location>
        <begin position="1"/>
        <end position="599"/>
    </location>
</feature>
<organism>
    <name type="scientific">Prochlorococcus marinus (strain MIT 9303)</name>
    <dbReference type="NCBI Taxonomy" id="59922"/>
    <lineage>
        <taxon>Bacteria</taxon>
        <taxon>Bacillati</taxon>
        <taxon>Cyanobacteriota</taxon>
        <taxon>Cyanophyceae</taxon>
        <taxon>Synechococcales</taxon>
        <taxon>Prochlorococcaceae</taxon>
        <taxon>Prochlorococcus</taxon>
    </lineage>
</organism>
<evidence type="ECO:0000255" key="1">
    <source>
        <dbReference type="HAMAP-Rule" id="MF_01569"/>
    </source>
</evidence>
<comment type="function">
    <text evidence="1">Catalyzes the attachment of proline to tRNA(Pro) in a two-step reaction: proline is first activated by ATP to form Pro-AMP and then transferred to the acceptor end of tRNA(Pro). As ProRS can inadvertently accommodate and process non-cognate amino acids such as alanine and cysteine, to avoid such errors it has two additional distinct editing activities against alanine. One activity is designated as 'pretransfer' editing and involves the tRNA(Pro)-independent hydrolysis of activated Ala-AMP. The other activity is designated 'posttransfer' editing and involves deacylation of mischarged Ala-tRNA(Pro). The misacylated Cys-tRNA(Pro) is not edited by ProRS.</text>
</comment>
<comment type="catalytic activity">
    <reaction evidence="1">
        <text>tRNA(Pro) + L-proline + ATP = L-prolyl-tRNA(Pro) + AMP + diphosphate</text>
        <dbReference type="Rhea" id="RHEA:14305"/>
        <dbReference type="Rhea" id="RHEA-COMP:9700"/>
        <dbReference type="Rhea" id="RHEA-COMP:9702"/>
        <dbReference type="ChEBI" id="CHEBI:30616"/>
        <dbReference type="ChEBI" id="CHEBI:33019"/>
        <dbReference type="ChEBI" id="CHEBI:60039"/>
        <dbReference type="ChEBI" id="CHEBI:78442"/>
        <dbReference type="ChEBI" id="CHEBI:78532"/>
        <dbReference type="ChEBI" id="CHEBI:456215"/>
        <dbReference type="EC" id="6.1.1.15"/>
    </reaction>
</comment>
<comment type="subunit">
    <text evidence="1">Homodimer.</text>
</comment>
<comment type="subcellular location">
    <subcellularLocation>
        <location evidence="1">Cytoplasm</location>
    </subcellularLocation>
</comment>
<comment type="domain">
    <text evidence="1">Consists of three domains: the N-terminal catalytic domain, the editing domain and the C-terminal anticodon-binding domain.</text>
</comment>
<comment type="similarity">
    <text evidence="1">Belongs to the class-II aminoacyl-tRNA synthetase family. ProS type 1 subfamily.</text>
</comment>
<protein>
    <recommendedName>
        <fullName evidence="1">Proline--tRNA ligase</fullName>
        <ecNumber evidence="1">6.1.1.15</ecNumber>
    </recommendedName>
    <alternativeName>
        <fullName evidence="1">Prolyl-tRNA synthetase</fullName>
        <shortName evidence="1">ProRS</shortName>
    </alternativeName>
</protein>
<name>SYP_PROM3</name>